<gene>
    <name evidence="3" type="primary">AK2</name>
</gene>
<proteinExistence type="evidence at protein level"/>
<protein>
    <recommendedName>
        <fullName evidence="3">Adenylate kinase 2, mitochondrial</fullName>
        <shortName evidence="3">AK 2</shortName>
        <ecNumber evidence="3">2.7.4.3</ecNumber>
    </recommendedName>
    <alternativeName>
        <fullName evidence="3">ATP-AMP transphosphorylase 2</fullName>
    </alternativeName>
    <alternativeName>
        <fullName evidence="3">ATP:AMP phosphotransferase</fullName>
    </alternativeName>
    <alternativeName>
        <fullName evidence="3">Adenylate monophosphate kinase</fullName>
    </alternativeName>
    <component>
        <recommendedName>
            <fullName evidence="3">Adenylate kinase 2, mitochondrial, N-terminally processed</fullName>
        </recommendedName>
    </component>
</protein>
<reference key="1">
    <citation type="journal article" date="1987" name="J. Biol. Chem.">
        <title>Isolation and characterization of two types of cDNA for mitochondrial adenylate kinase and their expression in Escherichia coli.</title>
        <authorList>
            <person name="Kishi F."/>
            <person name="Tanizawa Y."/>
            <person name="Nakazawa A."/>
        </authorList>
    </citation>
    <scope>NUCLEOTIDE SEQUENCE [MRNA] (ISOFORMS AK2A AND AK2B)</scope>
</reference>
<reference key="2">
    <citation type="journal article" date="1990" name="Gene">
        <title>Isolation and characterization of the gene encoding bovine adenylate kinase isozyme 2.</title>
        <authorList>
            <person name="Tanaka H."/>
            <person name="Yamada M."/>
            <person name="Kishi F."/>
            <person name="Nakazawa A."/>
        </authorList>
    </citation>
    <scope>NUCLEOTIDE SEQUENCE [GENOMIC DNA]</scope>
</reference>
<reference key="3">
    <citation type="journal article" date="2005" name="BMC Genomics">
        <title>Characterization of 954 bovine full-CDS cDNA sequences.</title>
        <authorList>
            <person name="Harhay G.P."/>
            <person name="Sonstegard T.S."/>
            <person name="Keele J.W."/>
            <person name="Heaton M.P."/>
            <person name="Clawson M.L."/>
            <person name="Snelling W.M."/>
            <person name="Wiedmann R.T."/>
            <person name="Van Tassell C.P."/>
            <person name="Smith T.P.L."/>
        </authorList>
    </citation>
    <scope>NUCLEOTIDE SEQUENCE [LARGE SCALE MRNA] (ISOFORM AK2B)</scope>
</reference>
<reference key="4">
    <citation type="submission" date="2006-01" db="EMBL/GenBank/DDBJ databases">
        <authorList>
            <consortium name="NIH - Mammalian Gene Collection (MGC) project"/>
        </authorList>
    </citation>
    <scope>NUCLEOTIDE SEQUENCE [LARGE SCALE MRNA] (ISOFORM AK2B)</scope>
    <source>
        <strain>Hereford</strain>
        <tissue>Testis</tissue>
    </source>
</reference>
<reference key="5">
    <citation type="journal article" date="1986" name="Eur. J. Biochem.">
        <title>Mitochondrial adenylate kinase (AK2) from bovine heart. The complete primary structure.</title>
        <authorList>
            <person name="Frank R."/>
            <person name="Trosin M."/>
            <person name="Tomasselli A.G."/>
            <person name="Noda L."/>
            <person name="Krauth-Siegel R.L."/>
            <person name="Schirmer R.H."/>
        </authorList>
    </citation>
    <scope>PROTEIN SEQUENCE OF 2-239</scope>
</reference>
<reference key="6">
    <citation type="journal article" date="1996" name="Protein Sci.">
        <title>The structure of bovine mitochondrial adenylate kinase: comparison with isoenzymes in other compartments.</title>
        <authorList>
            <person name="Schlauderer G.J."/>
            <person name="Schulz G.E."/>
        </authorList>
    </citation>
    <scope>X-RAY CRYSTALLOGRAPHY (1.92 ANGSTROMS)</scope>
    <scope>DISULFIDE BOND</scope>
</reference>
<organism>
    <name type="scientific">Bos taurus</name>
    <name type="common">Bovine</name>
    <dbReference type="NCBI Taxonomy" id="9913"/>
    <lineage>
        <taxon>Eukaryota</taxon>
        <taxon>Metazoa</taxon>
        <taxon>Chordata</taxon>
        <taxon>Craniata</taxon>
        <taxon>Vertebrata</taxon>
        <taxon>Euteleostomi</taxon>
        <taxon>Mammalia</taxon>
        <taxon>Eutheria</taxon>
        <taxon>Laurasiatheria</taxon>
        <taxon>Artiodactyla</taxon>
        <taxon>Ruminantia</taxon>
        <taxon>Pecora</taxon>
        <taxon>Bovidae</taxon>
        <taxon>Bovinae</taxon>
        <taxon>Bos</taxon>
    </lineage>
</organism>
<evidence type="ECO:0000250" key="1">
    <source>
        <dbReference type="UniProtKB" id="P54819"/>
    </source>
</evidence>
<evidence type="ECO:0000250" key="2">
    <source>
        <dbReference type="UniProtKB" id="Q9WTP6"/>
    </source>
</evidence>
<evidence type="ECO:0000255" key="3">
    <source>
        <dbReference type="HAMAP-Rule" id="MF_03168"/>
    </source>
</evidence>
<evidence type="ECO:0000256" key="4">
    <source>
        <dbReference type="SAM" id="MobiDB-lite"/>
    </source>
</evidence>
<evidence type="ECO:0000269" key="5">
    <source>
    </source>
</evidence>
<evidence type="ECO:0000269" key="6">
    <source>
    </source>
</evidence>
<evidence type="ECO:0000303" key="7">
    <source>
    </source>
</evidence>
<evidence type="ECO:0000303" key="8">
    <source>
    </source>
</evidence>
<evidence type="ECO:0000303" key="9">
    <source ref="4"/>
</evidence>
<evidence type="ECO:0007829" key="10">
    <source>
        <dbReference type="PDB" id="1AK2"/>
    </source>
</evidence>
<name>KAD2_BOVIN</name>
<accession>P08166</accession>
<accession>P08167</accession>
<accession>Q2KIJ7</accession>
<feature type="chain" id="PRO_0000423211" description="Adenylate kinase 2, mitochondrial">
    <location>
        <begin position="1"/>
        <end position="241"/>
    </location>
</feature>
<feature type="initiator methionine" description="Removed; alternate" evidence="3 5">
    <location>
        <position position="1"/>
    </location>
</feature>
<feature type="chain" id="PRO_0000158916" description="Adenylate kinase 2, mitochondrial, N-terminally processed">
    <location>
        <begin position="2"/>
        <end position="241"/>
    </location>
</feature>
<feature type="region of interest" description="Disordered" evidence="4">
    <location>
        <begin position="1"/>
        <end position="24"/>
    </location>
</feature>
<feature type="region of interest" description="NMP">
    <location>
        <begin position="47"/>
        <end position="76"/>
    </location>
</feature>
<feature type="region of interest" description="LID">
    <location>
        <begin position="143"/>
        <end position="180"/>
    </location>
</feature>
<feature type="compositionally biased region" description="Low complexity" evidence="4">
    <location>
        <begin position="1"/>
        <end position="15"/>
    </location>
</feature>
<feature type="binding site" evidence="3">
    <location>
        <begin position="27"/>
        <end position="32"/>
    </location>
    <ligand>
        <name>ATP</name>
        <dbReference type="ChEBI" id="CHEBI:30616"/>
    </ligand>
</feature>
<feature type="binding site" evidence="3">
    <location>
        <position position="48"/>
    </location>
    <ligand>
        <name>AMP</name>
        <dbReference type="ChEBI" id="CHEBI:456215"/>
    </ligand>
</feature>
<feature type="binding site" evidence="3">
    <location>
        <position position="53"/>
    </location>
    <ligand>
        <name>AMP</name>
        <dbReference type="ChEBI" id="CHEBI:456215"/>
    </ligand>
</feature>
<feature type="binding site" evidence="3">
    <location>
        <begin position="74"/>
        <end position="76"/>
    </location>
    <ligand>
        <name>AMP</name>
        <dbReference type="ChEBI" id="CHEBI:456215"/>
    </ligand>
</feature>
<feature type="binding site" evidence="3">
    <location>
        <begin position="102"/>
        <end position="105"/>
    </location>
    <ligand>
        <name>AMP</name>
        <dbReference type="ChEBI" id="CHEBI:456215"/>
    </ligand>
</feature>
<feature type="binding site" evidence="3">
    <location>
        <position position="109"/>
    </location>
    <ligand>
        <name>AMP</name>
        <dbReference type="ChEBI" id="CHEBI:456215"/>
    </ligand>
</feature>
<feature type="binding site" evidence="3">
    <location>
        <position position="144"/>
    </location>
    <ligand>
        <name>ATP</name>
        <dbReference type="ChEBI" id="CHEBI:30616"/>
    </ligand>
</feature>
<feature type="binding site" evidence="3">
    <location>
        <begin position="153"/>
        <end position="154"/>
    </location>
    <ligand>
        <name>ATP</name>
        <dbReference type="ChEBI" id="CHEBI:30616"/>
    </ligand>
</feature>
<feature type="binding site" evidence="3">
    <location>
        <position position="177"/>
    </location>
    <ligand>
        <name>AMP</name>
        <dbReference type="ChEBI" id="CHEBI:456215"/>
    </ligand>
</feature>
<feature type="binding site" evidence="3">
    <location>
        <position position="188"/>
    </location>
    <ligand>
        <name>AMP</name>
        <dbReference type="ChEBI" id="CHEBI:456215"/>
    </ligand>
</feature>
<feature type="binding site" evidence="3">
    <location>
        <position position="216"/>
    </location>
    <ligand>
        <name>ATP</name>
        <dbReference type="ChEBI" id="CHEBI:30616"/>
    </ligand>
</feature>
<feature type="modified residue" description="N-acetylmethionine" evidence="1">
    <location>
        <position position="1"/>
    </location>
</feature>
<feature type="modified residue" description="Phosphoserine" evidence="1">
    <location>
        <position position="60"/>
    </location>
</feature>
<feature type="modified residue" description="N6-succinyllysine" evidence="2">
    <location>
        <position position="64"/>
    </location>
</feature>
<feature type="modified residue" description="N6-succinyllysine" evidence="2">
    <location>
        <position position="95"/>
    </location>
</feature>
<feature type="modified residue" description="Phosphoserine" evidence="1">
    <location>
        <position position="135"/>
    </location>
</feature>
<feature type="modified residue" description="N6-acetyllysine" evidence="2">
    <location>
        <position position="183"/>
    </location>
</feature>
<feature type="modified residue" description="Phosphothreonine" evidence="1">
    <location>
        <position position="197"/>
    </location>
</feature>
<feature type="disulfide bond" evidence="3 6">
    <location>
        <begin position="44"/>
        <end position="94"/>
    </location>
</feature>
<feature type="splice variant" id="VSP_002789" description="In isoform AK2B." evidence="7 8 9">
    <original>CKDLVMFI</original>
    <variation>S</variation>
    <location>
        <begin position="234"/>
        <end position="241"/>
    </location>
</feature>
<feature type="strand" evidence="10">
    <location>
        <begin position="19"/>
        <end position="23"/>
    </location>
</feature>
<feature type="helix" evidence="10">
    <location>
        <begin position="30"/>
        <end position="41"/>
    </location>
</feature>
<feature type="strand" evidence="10">
    <location>
        <begin position="44"/>
        <end position="47"/>
    </location>
</feature>
<feature type="helix" evidence="10">
    <location>
        <begin position="48"/>
        <end position="58"/>
    </location>
</feature>
<feature type="helix" evidence="10">
    <location>
        <begin position="61"/>
        <end position="71"/>
    </location>
</feature>
<feature type="helix" evidence="10">
    <location>
        <begin position="78"/>
        <end position="89"/>
    </location>
</feature>
<feature type="helix" evidence="10">
    <location>
        <begin position="92"/>
        <end position="94"/>
    </location>
</feature>
<feature type="strand" evidence="10">
    <location>
        <begin position="98"/>
        <end position="102"/>
    </location>
</feature>
<feature type="helix" evidence="10">
    <location>
        <begin position="107"/>
        <end position="120"/>
    </location>
</feature>
<feature type="strand" evidence="10">
    <location>
        <begin position="126"/>
        <end position="131"/>
    </location>
</feature>
<feature type="helix" evidence="10">
    <location>
        <begin position="134"/>
        <end position="142"/>
    </location>
</feature>
<feature type="turn" evidence="10">
    <location>
        <begin position="148"/>
        <end position="150"/>
    </location>
</feature>
<feature type="strand" evidence="10">
    <location>
        <begin position="153"/>
        <end position="155"/>
    </location>
</feature>
<feature type="turn" evidence="10">
    <location>
        <begin position="156"/>
        <end position="158"/>
    </location>
</feature>
<feature type="turn" evidence="10">
    <location>
        <begin position="168"/>
        <end position="170"/>
    </location>
</feature>
<feature type="helix" evidence="10">
    <location>
        <begin position="182"/>
        <end position="205"/>
    </location>
</feature>
<feature type="strand" evidence="10">
    <location>
        <begin position="209"/>
        <end position="213"/>
    </location>
</feature>
<feature type="helix" evidence="10">
    <location>
        <begin position="218"/>
        <end position="232"/>
    </location>
</feature>
<dbReference type="EC" id="2.7.4.3" evidence="3"/>
<dbReference type="EMBL" id="M16224">
    <property type="protein sequence ID" value="AAA30364.1"/>
    <property type="molecule type" value="mRNA"/>
</dbReference>
<dbReference type="EMBL" id="M16225">
    <property type="protein sequence ID" value="AAA30365.1"/>
    <property type="molecule type" value="mRNA"/>
</dbReference>
<dbReference type="EMBL" id="D90069">
    <property type="protein sequence ID" value="BAA14110.1"/>
    <property type="molecule type" value="Genomic_DNA"/>
</dbReference>
<dbReference type="EMBL" id="D90069">
    <property type="protein sequence ID" value="BAA14109.1"/>
    <property type="molecule type" value="Genomic_DNA"/>
</dbReference>
<dbReference type="EMBL" id="BT025476">
    <property type="protein sequence ID" value="ABF57432.1"/>
    <property type="molecule type" value="mRNA"/>
</dbReference>
<dbReference type="EMBL" id="BC112613">
    <property type="protein sequence ID" value="AAI12614.1"/>
    <property type="molecule type" value="mRNA"/>
</dbReference>
<dbReference type="PIR" id="B29792">
    <property type="entry name" value="B29792"/>
</dbReference>
<dbReference type="PIR" id="JS0422">
    <property type="entry name" value="JS0422"/>
</dbReference>
<dbReference type="RefSeq" id="NP_776314.1">
    <molecule id="P08166-2"/>
    <property type="nucleotide sequence ID" value="NM_173889.1"/>
</dbReference>
<dbReference type="RefSeq" id="XP_005202939.1">
    <molecule id="P08166-1"/>
    <property type="nucleotide sequence ID" value="XM_005202882.3"/>
</dbReference>
<dbReference type="PDB" id="1AK2">
    <property type="method" value="X-ray"/>
    <property type="resolution" value="1.92 A"/>
    <property type="chains" value="A=2-233"/>
</dbReference>
<dbReference type="PDB" id="2AK2">
    <property type="method" value="X-ray"/>
    <property type="resolution" value="2.10 A"/>
    <property type="chains" value="A=2-233"/>
</dbReference>
<dbReference type="PDBsum" id="1AK2"/>
<dbReference type="PDBsum" id="2AK2"/>
<dbReference type="SMR" id="P08166"/>
<dbReference type="FunCoup" id="P08166">
    <property type="interactions" value="2528"/>
</dbReference>
<dbReference type="IntAct" id="P08166">
    <property type="interactions" value="1"/>
</dbReference>
<dbReference type="STRING" id="9913.ENSBTAP00000023406"/>
<dbReference type="GlyGen" id="P08166">
    <property type="glycosylation" value="1 site, 1 O-linked glycan (1 site)"/>
</dbReference>
<dbReference type="PaxDb" id="9913-ENSBTAP00000023406"/>
<dbReference type="PeptideAtlas" id="P08166"/>
<dbReference type="Ensembl" id="ENSBTAT00000023406.5">
    <molecule id="P08166-2"/>
    <property type="protein sequence ID" value="ENSBTAP00000023406.3"/>
    <property type="gene ID" value="ENSBTAG00000017605.6"/>
</dbReference>
<dbReference type="GeneID" id="280716"/>
<dbReference type="KEGG" id="bta:280716"/>
<dbReference type="CTD" id="204"/>
<dbReference type="VEuPathDB" id="HostDB:ENSBTAG00000017605"/>
<dbReference type="eggNOG" id="KOG3078">
    <property type="taxonomic scope" value="Eukaryota"/>
</dbReference>
<dbReference type="GeneTree" id="ENSGT00940000154576"/>
<dbReference type="HOGENOM" id="CLU_032354_1_0_1"/>
<dbReference type="InParanoid" id="P08166"/>
<dbReference type="OMA" id="VYHEQTA"/>
<dbReference type="OrthoDB" id="439792at2759"/>
<dbReference type="TreeFam" id="TF300896"/>
<dbReference type="Reactome" id="R-BTA-499943">
    <property type="pathway name" value="Interconversion of nucleotide di- and triphosphates"/>
</dbReference>
<dbReference type="SABIO-RK" id="P08166"/>
<dbReference type="EvolutionaryTrace" id="P08166"/>
<dbReference type="Proteomes" id="UP000009136">
    <property type="component" value="Chromosome 2"/>
</dbReference>
<dbReference type="Bgee" id="ENSBTAG00000017605">
    <property type="expression patterns" value="Expressed in rumen papilla and 105 other cell types or tissues"/>
</dbReference>
<dbReference type="GO" id="GO:0005737">
    <property type="term" value="C:cytoplasm"/>
    <property type="evidence" value="ECO:0000318"/>
    <property type="project" value="GO_Central"/>
</dbReference>
<dbReference type="GO" id="GO:0005743">
    <property type="term" value="C:mitochondrial inner membrane"/>
    <property type="evidence" value="ECO:0000250"/>
    <property type="project" value="AgBase"/>
</dbReference>
<dbReference type="GO" id="GO:0005758">
    <property type="term" value="C:mitochondrial intermembrane space"/>
    <property type="evidence" value="ECO:0007669"/>
    <property type="project" value="UniProtKB-SubCell"/>
</dbReference>
<dbReference type="GO" id="GO:0005739">
    <property type="term" value="C:mitochondrion"/>
    <property type="evidence" value="ECO:0000250"/>
    <property type="project" value="AgBase"/>
</dbReference>
<dbReference type="GO" id="GO:0004017">
    <property type="term" value="F:adenylate kinase activity"/>
    <property type="evidence" value="ECO:0000318"/>
    <property type="project" value="GO_Central"/>
</dbReference>
<dbReference type="GO" id="GO:0005524">
    <property type="term" value="F:ATP binding"/>
    <property type="evidence" value="ECO:0007669"/>
    <property type="project" value="UniProtKB-KW"/>
</dbReference>
<dbReference type="GO" id="GO:0006172">
    <property type="term" value="P:ADP biosynthetic process"/>
    <property type="evidence" value="ECO:0000318"/>
    <property type="project" value="GO_Central"/>
</dbReference>
<dbReference type="GO" id="GO:0046033">
    <property type="term" value="P:AMP metabolic process"/>
    <property type="evidence" value="ECO:0007669"/>
    <property type="project" value="UniProtKB-UniRule"/>
</dbReference>
<dbReference type="GO" id="GO:0046034">
    <property type="term" value="P:ATP metabolic process"/>
    <property type="evidence" value="ECO:0007669"/>
    <property type="project" value="UniProtKB-UniRule"/>
</dbReference>
<dbReference type="CDD" id="cd01428">
    <property type="entry name" value="ADK"/>
    <property type="match status" value="1"/>
</dbReference>
<dbReference type="FunFam" id="3.40.50.300:FF:000106">
    <property type="entry name" value="Adenylate kinase mitochondrial"/>
    <property type="match status" value="1"/>
</dbReference>
<dbReference type="Gene3D" id="3.40.50.300">
    <property type="entry name" value="P-loop containing nucleotide triphosphate hydrolases"/>
    <property type="match status" value="1"/>
</dbReference>
<dbReference type="HAMAP" id="MF_00235">
    <property type="entry name" value="Adenylate_kinase_Adk"/>
    <property type="match status" value="1"/>
</dbReference>
<dbReference type="HAMAP" id="MF_03168">
    <property type="entry name" value="Adenylate_kinase_AK2"/>
    <property type="match status" value="1"/>
</dbReference>
<dbReference type="InterPro" id="IPR006259">
    <property type="entry name" value="Adenyl_kin_sub"/>
</dbReference>
<dbReference type="InterPro" id="IPR000850">
    <property type="entry name" value="Adenylat/UMP-CMP_kin"/>
</dbReference>
<dbReference type="InterPro" id="IPR033690">
    <property type="entry name" value="Adenylat_kinase_CS"/>
</dbReference>
<dbReference type="InterPro" id="IPR007862">
    <property type="entry name" value="Adenylate_kinase_lid-dom"/>
</dbReference>
<dbReference type="InterPro" id="IPR028587">
    <property type="entry name" value="AK2"/>
</dbReference>
<dbReference type="InterPro" id="IPR027417">
    <property type="entry name" value="P-loop_NTPase"/>
</dbReference>
<dbReference type="NCBIfam" id="TIGR01351">
    <property type="entry name" value="adk"/>
    <property type="match status" value="1"/>
</dbReference>
<dbReference type="NCBIfam" id="NF001381">
    <property type="entry name" value="PRK00279.1-3"/>
    <property type="match status" value="1"/>
</dbReference>
<dbReference type="NCBIfam" id="NF011100">
    <property type="entry name" value="PRK14527.1"/>
    <property type="match status" value="1"/>
</dbReference>
<dbReference type="PANTHER" id="PTHR23359">
    <property type="entry name" value="NUCLEOTIDE KINASE"/>
    <property type="match status" value="1"/>
</dbReference>
<dbReference type="Pfam" id="PF00406">
    <property type="entry name" value="ADK"/>
    <property type="match status" value="1"/>
</dbReference>
<dbReference type="Pfam" id="PF05191">
    <property type="entry name" value="ADK_lid"/>
    <property type="match status" value="1"/>
</dbReference>
<dbReference type="PRINTS" id="PR00094">
    <property type="entry name" value="ADENYLTKNASE"/>
</dbReference>
<dbReference type="SUPFAM" id="SSF52540">
    <property type="entry name" value="P-loop containing nucleoside triphosphate hydrolases"/>
    <property type="match status" value="1"/>
</dbReference>
<dbReference type="PROSITE" id="PS00113">
    <property type="entry name" value="ADENYLATE_KINASE"/>
    <property type="match status" value="1"/>
</dbReference>
<keyword id="KW-0002">3D-structure</keyword>
<keyword id="KW-0007">Acetylation</keyword>
<keyword id="KW-0025">Alternative splicing</keyword>
<keyword id="KW-0067">ATP-binding</keyword>
<keyword id="KW-0903">Direct protein sequencing</keyword>
<keyword id="KW-1015">Disulfide bond</keyword>
<keyword id="KW-0418">Kinase</keyword>
<keyword id="KW-0496">Mitochondrion</keyword>
<keyword id="KW-0547">Nucleotide-binding</keyword>
<keyword id="KW-0597">Phosphoprotein</keyword>
<keyword id="KW-1185">Reference proteome</keyword>
<keyword id="KW-0808">Transferase</keyword>
<sequence>MAPNVPAAEPVPESPKGVRAVLLGPPGAGKGTQAPKLAKNFCVCHLATGDMLRAMVASGSELGKKLKATMDAGKLVSDEMVLELIEKNLETPPCKNGFLLDGFPRTVRQAEMLDDLMEKRKEKLDSVIEFSIPDSLLIRRITGRLIHPQSGRSYHEEFNPPKEPMKDDITGEPLIRRSDDNKKALKIRLEAYHTQTTPLVEYYSKRGIHSAIDASQTPDVVFASILAAFSKATCKDLVMFI</sequence>
<comment type="function">
    <text evidence="3">Catalyzes the reversible transfer of the terminal phosphate group between ATP and AMP. Plays an important role in cellular energy homeostasis and in adenine nucleotide metabolism. Adenylate kinase activity is critical for regulation of the phosphate utilization and the AMP de novo biosynthesis pathways. Plays a key role in hematopoiesis.</text>
</comment>
<comment type="catalytic activity">
    <reaction evidence="3">
        <text>AMP + ATP = 2 ADP</text>
        <dbReference type="Rhea" id="RHEA:12973"/>
        <dbReference type="ChEBI" id="CHEBI:30616"/>
        <dbReference type="ChEBI" id="CHEBI:456215"/>
        <dbReference type="ChEBI" id="CHEBI:456216"/>
        <dbReference type="EC" id="2.7.4.3"/>
    </reaction>
</comment>
<comment type="subunit">
    <text>Monomer.</text>
</comment>
<comment type="subcellular location">
    <subcellularLocation>
        <location>Mitochondrion intermembrane space</location>
    </subcellularLocation>
</comment>
<comment type="alternative products">
    <event type="alternative splicing"/>
    <isoform>
        <id>P08166-1</id>
        <name>AK2A</name>
        <sequence type="displayed"/>
    </isoform>
    <isoform>
        <id>P08166-2</id>
        <name>AK2B</name>
        <sequence type="described" ref="VSP_002789"/>
    </isoform>
</comment>
<comment type="domain">
    <text>Consists of three domains, a large central CORE domain and two small peripheral domains, NMPbind and LID, which undergo movements during catalysis. The LID domain closes over the site of phosphoryl transfer upon ATP binding. Assembling and dissambling the active center during each catalytic cycle provides an effective means to prevent ATP hydrolysis.</text>
</comment>
<comment type="similarity">
    <text evidence="3">Belongs to the adenylate kinase family. AK2 subfamily.</text>
</comment>